<dbReference type="EC" id="5.2.1.8" evidence="1"/>
<dbReference type="EMBL" id="AE005674">
    <property type="protein sequence ID" value="AAN41716.1"/>
    <property type="molecule type" value="Genomic_DNA"/>
</dbReference>
<dbReference type="EMBL" id="AE014073">
    <property type="protein sequence ID" value="AAP15596.1"/>
    <property type="molecule type" value="Genomic_DNA"/>
</dbReference>
<dbReference type="RefSeq" id="NP_706009.1">
    <property type="nucleotide sequence ID" value="NC_004337.2"/>
</dbReference>
<dbReference type="RefSeq" id="WP_000800457.1">
    <property type="nucleotide sequence ID" value="NZ_WPGW01000005.1"/>
</dbReference>
<dbReference type="SMR" id="P0ABZ9"/>
<dbReference type="STRING" id="198214.SF0050"/>
<dbReference type="PaxDb" id="198214-SF0050"/>
<dbReference type="GeneID" id="1024578"/>
<dbReference type="GeneID" id="93777382"/>
<dbReference type="KEGG" id="sfl:SF0050"/>
<dbReference type="KEGG" id="sfx:S0052"/>
<dbReference type="PATRIC" id="fig|198214.7.peg.59"/>
<dbReference type="HOGENOM" id="CLU_034646_11_0_6"/>
<dbReference type="Proteomes" id="UP000001006">
    <property type="component" value="Chromosome"/>
</dbReference>
<dbReference type="Proteomes" id="UP000002673">
    <property type="component" value="Chromosome"/>
</dbReference>
<dbReference type="GO" id="GO:0030288">
    <property type="term" value="C:outer membrane-bounded periplasmic space"/>
    <property type="evidence" value="ECO:0007669"/>
    <property type="project" value="InterPro"/>
</dbReference>
<dbReference type="GO" id="GO:0042277">
    <property type="term" value="F:peptide binding"/>
    <property type="evidence" value="ECO:0007669"/>
    <property type="project" value="InterPro"/>
</dbReference>
<dbReference type="GO" id="GO:0003755">
    <property type="term" value="F:peptidyl-prolyl cis-trans isomerase activity"/>
    <property type="evidence" value="ECO:0007669"/>
    <property type="project" value="UniProtKB-UniRule"/>
</dbReference>
<dbReference type="GO" id="GO:0051082">
    <property type="term" value="F:unfolded protein binding"/>
    <property type="evidence" value="ECO:0007669"/>
    <property type="project" value="UniProtKB-UniRule"/>
</dbReference>
<dbReference type="GO" id="GO:0043165">
    <property type="term" value="P:Gram-negative-bacterium-type cell outer membrane assembly"/>
    <property type="evidence" value="ECO:0007669"/>
    <property type="project" value="InterPro"/>
</dbReference>
<dbReference type="GO" id="GO:0006457">
    <property type="term" value="P:protein folding"/>
    <property type="evidence" value="ECO:0007669"/>
    <property type="project" value="UniProtKB-UniRule"/>
</dbReference>
<dbReference type="GO" id="GO:0050821">
    <property type="term" value="P:protein stabilization"/>
    <property type="evidence" value="ECO:0007669"/>
    <property type="project" value="InterPro"/>
</dbReference>
<dbReference type="FunFam" id="1.10.4030.10:FF:000002">
    <property type="entry name" value="Chaperone SurA"/>
    <property type="match status" value="1"/>
</dbReference>
<dbReference type="FunFam" id="3.10.50.40:FF:000007">
    <property type="entry name" value="Chaperone SurA"/>
    <property type="match status" value="1"/>
</dbReference>
<dbReference type="Gene3D" id="3.10.50.40">
    <property type="match status" value="2"/>
</dbReference>
<dbReference type="Gene3D" id="1.10.4030.10">
    <property type="entry name" value="Porin chaperone SurA, peptide-binding domain"/>
    <property type="match status" value="2"/>
</dbReference>
<dbReference type="HAMAP" id="MF_01183">
    <property type="entry name" value="Chaperone_SurA"/>
    <property type="match status" value="1"/>
</dbReference>
<dbReference type="InterPro" id="IPR050280">
    <property type="entry name" value="OMP_Chaperone_SurA"/>
</dbReference>
<dbReference type="InterPro" id="IPR046357">
    <property type="entry name" value="PPIase_dom_sf"/>
</dbReference>
<dbReference type="InterPro" id="IPR000297">
    <property type="entry name" value="PPIase_PpiC"/>
</dbReference>
<dbReference type="InterPro" id="IPR023058">
    <property type="entry name" value="PPIase_PpiC_CS"/>
</dbReference>
<dbReference type="InterPro" id="IPR023034">
    <property type="entry name" value="PPIase_SurA"/>
</dbReference>
<dbReference type="InterPro" id="IPR015391">
    <property type="entry name" value="SurA_N"/>
</dbReference>
<dbReference type="InterPro" id="IPR027304">
    <property type="entry name" value="Trigger_fact/SurA_dom_sf"/>
</dbReference>
<dbReference type="NCBIfam" id="NF008038">
    <property type="entry name" value="PRK10770.1"/>
    <property type="match status" value="1"/>
</dbReference>
<dbReference type="PANTHER" id="PTHR47637">
    <property type="entry name" value="CHAPERONE SURA"/>
    <property type="match status" value="1"/>
</dbReference>
<dbReference type="PANTHER" id="PTHR47637:SF1">
    <property type="entry name" value="CHAPERONE SURA"/>
    <property type="match status" value="1"/>
</dbReference>
<dbReference type="Pfam" id="PF00639">
    <property type="entry name" value="Rotamase"/>
    <property type="match status" value="1"/>
</dbReference>
<dbReference type="Pfam" id="PF13616">
    <property type="entry name" value="Rotamase_3"/>
    <property type="match status" value="1"/>
</dbReference>
<dbReference type="Pfam" id="PF09312">
    <property type="entry name" value="SurA_N"/>
    <property type="match status" value="1"/>
</dbReference>
<dbReference type="SUPFAM" id="SSF54534">
    <property type="entry name" value="FKBP-like"/>
    <property type="match status" value="2"/>
</dbReference>
<dbReference type="SUPFAM" id="SSF109998">
    <property type="entry name" value="Triger factor/SurA peptide-binding domain-like"/>
    <property type="match status" value="1"/>
</dbReference>
<dbReference type="PROSITE" id="PS01096">
    <property type="entry name" value="PPIC_PPIASE_1"/>
    <property type="match status" value="2"/>
</dbReference>
<dbReference type="PROSITE" id="PS50198">
    <property type="entry name" value="PPIC_PPIASE_2"/>
    <property type="match status" value="2"/>
</dbReference>
<comment type="function">
    <text evidence="1">Chaperone involved in the correct folding and assembly of outer membrane proteins. Recognizes specific patterns of aromatic residues and the orientation of their side chains, which are found more frequently in integral outer membrane proteins. May act in both early periplasmic and late outer membrane-associated steps of protein maturation.</text>
</comment>
<comment type="catalytic activity">
    <reaction evidence="1">
        <text>[protein]-peptidylproline (omega=180) = [protein]-peptidylproline (omega=0)</text>
        <dbReference type="Rhea" id="RHEA:16237"/>
        <dbReference type="Rhea" id="RHEA-COMP:10747"/>
        <dbReference type="Rhea" id="RHEA-COMP:10748"/>
        <dbReference type="ChEBI" id="CHEBI:83833"/>
        <dbReference type="ChEBI" id="CHEBI:83834"/>
        <dbReference type="EC" id="5.2.1.8"/>
    </reaction>
</comment>
<comment type="subcellular location">
    <subcellularLocation>
        <location evidence="1">Periplasm</location>
    </subcellularLocation>
    <text evidence="1">Is capable of associating with the outer membrane.</text>
</comment>
<comment type="domain">
    <text evidence="1">The PPIase activity resides only in the second parvulin domain. The N-terminal region and the C-terminal tail are necessary and sufficient for the chaperone activity of SurA. The PPIase activity is dispensable for SurA to function as a chaperone. The N-terminal region and the C-terminal tail are also required for porin recognition.</text>
</comment>
<feature type="signal peptide" evidence="1">
    <location>
        <begin position="1"/>
        <end position="20"/>
    </location>
</feature>
<feature type="chain" id="PRO_0000042804" description="Chaperone SurA">
    <location>
        <begin position="21"/>
        <end position="428"/>
    </location>
</feature>
<feature type="domain" description="PpiC 1" evidence="1">
    <location>
        <begin position="171"/>
        <end position="272"/>
    </location>
</feature>
<feature type="domain" description="PpiC 2" evidence="1">
    <location>
        <begin position="282"/>
        <end position="382"/>
    </location>
</feature>
<proteinExistence type="inferred from homology"/>
<gene>
    <name evidence="1" type="primary">surA</name>
    <name type="ordered locus">SF0050</name>
    <name type="ordered locus">S0052</name>
</gene>
<accession>P0ABZ9</accession>
<accession>P21202</accession>
<accession>P75630</accession>
<accession>Q8KIP6</accession>
<accession>Q8KMY0</accession>
<sequence>MKNWKTLLLGIAMIANTSFAAPQVVDKVAAVVNNGVVLESDVDGLMQSVKLNAAQARQQLPDDATLRHQIMERLIMDQIILQMGQKMGVKISDEQLDQAIANIAKQNNMTLDQMRSRLAYDGLNYNTYRNQIRKEMIISEVRNNEVRRRITILPQEVESLAQQVGNQNDASTELNLSHILIPLPENPTSDQVNEAESQARAIVDQARNGADFGKLAIAHSADQQALNGGQMGWGRIQELPGIFAQALSTAKKGDIVGPIRSGVGFHILKVNDLRGESKNISVTEVHARHILLKPSPIMTDEQARVKLEQIAADIKSGKTTFAAAAKEFSQDPGSANQGGDLGWATPDIFDPAFRDALTRLNKGQMSAPVHSSFGWHLIELLDTRNVDKTDAAQKDRAYRMLMNRKFSEEAASWMQEQRASAYVKILSN</sequence>
<evidence type="ECO:0000255" key="1">
    <source>
        <dbReference type="HAMAP-Rule" id="MF_01183"/>
    </source>
</evidence>
<protein>
    <recommendedName>
        <fullName evidence="1">Chaperone SurA</fullName>
    </recommendedName>
    <alternativeName>
        <fullName evidence="1">Peptidyl-prolyl cis-trans isomerase SurA</fullName>
        <shortName evidence="1">PPIase SurA</shortName>
        <ecNumber evidence="1">5.2.1.8</ecNumber>
    </alternativeName>
    <alternativeName>
        <fullName evidence="1">Rotamase SurA</fullName>
    </alternativeName>
</protein>
<reference key="1">
    <citation type="journal article" date="2002" name="Nucleic Acids Res.">
        <title>Genome sequence of Shigella flexneri 2a: insights into pathogenicity through comparison with genomes of Escherichia coli K12 and O157.</title>
        <authorList>
            <person name="Jin Q."/>
            <person name="Yuan Z."/>
            <person name="Xu J."/>
            <person name="Wang Y."/>
            <person name="Shen Y."/>
            <person name="Lu W."/>
            <person name="Wang J."/>
            <person name="Liu H."/>
            <person name="Yang J."/>
            <person name="Yang F."/>
            <person name="Zhang X."/>
            <person name="Zhang J."/>
            <person name="Yang G."/>
            <person name="Wu H."/>
            <person name="Qu D."/>
            <person name="Dong J."/>
            <person name="Sun L."/>
            <person name="Xue Y."/>
            <person name="Zhao A."/>
            <person name="Gao Y."/>
            <person name="Zhu J."/>
            <person name="Kan B."/>
            <person name="Ding K."/>
            <person name="Chen S."/>
            <person name="Cheng H."/>
            <person name="Yao Z."/>
            <person name="He B."/>
            <person name="Chen R."/>
            <person name="Ma D."/>
            <person name="Qiang B."/>
            <person name="Wen Y."/>
            <person name="Hou Y."/>
            <person name="Yu J."/>
        </authorList>
    </citation>
    <scope>NUCLEOTIDE SEQUENCE [LARGE SCALE GENOMIC DNA]</scope>
    <source>
        <strain>301 / Serotype 2a</strain>
    </source>
</reference>
<reference key="2">
    <citation type="journal article" date="2003" name="Infect. Immun.">
        <title>Complete genome sequence and comparative genomics of Shigella flexneri serotype 2a strain 2457T.</title>
        <authorList>
            <person name="Wei J."/>
            <person name="Goldberg M.B."/>
            <person name="Burland V."/>
            <person name="Venkatesan M.M."/>
            <person name="Deng W."/>
            <person name="Fournier G."/>
            <person name="Mayhew G.F."/>
            <person name="Plunkett G. III"/>
            <person name="Rose D.J."/>
            <person name="Darling A."/>
            <person name="Mau B."/>
            <person name="Perna N.T."/>
            <person name="Payne S.M."/>
            <person name="Runyen-Janecky L.J."/>
            <person name="Zhou S."/>
            <person name="Schwartz D.C."/>
            <person name="Blattner F.R."/>
        </authorList>
    </citation>
    <scope>NUCLEOTIDE SEQUENCE [LARGE SCALE GENOMIC DNA]</scope>
    <source>
        <strain>ATCC 700930 / 2457T / Serotype 2a</strain>
    </source>
</reference>
<keyword id="KW-0143">Chaperone</keyword>
<keyword id="KW-0413">Isomerase</keyword>
<keyword id="KW-0574">Periplasm</keyword>
<keyword id="KW-1185">Reference proteome</keyword>
<keyword id="KW-0677">Repeat</keyword>
<keyword id="KW-0697">Rotamase</keyword>
<keyword id="KW-0732">Signal</keyword>
<organism>
    <name type="scientific">Shigella flexneri</name>
    <dbReference type="NCBI Taxonomy" id="623"/>
    <lineage>
        <taxon>Bacteria</taxon>
        <taxon>Pseudomonadati</taxon>
        <taxon>Pseudomonadota</taxon>
        <taxon>Gammaproteobacteria</taxon>
        <taxon>Enterobacterales</taxon>
        <taxon>Enterobacteriaceae</taxon>
        <taxon>Shigella</taxon>
    </lineage>
</organism>
<name>SURA_SHIFL</name>